<sequence>MTLATPAHKRILLKLSGEALMGDDAFGINRATIVRMVEEIAEVTRLGVQVAVVIGGGNIFRGVAGGSVGMDRATADYMGMLATVMNALALADAMDKQGLTARVMSAIGIEQVVEPYVRPKALQYLEEGKVVVFAAGTGNPFFTTDTAAALRGAEIGAEVVLKATKVDGVYTADPMKDPSATRYAKLTFDEAMSRNLGILDATAFALCRDQKLPIRVFSIVKHGALKRVVMGEDEGTLVYA</sequence>
<evidence type="ECO:0000255" key="1">
    <source>
        <dbReference type="HAMAP-Rule" id="MF_01220"/>
    </source>
</evidence>
<feature type="chain" id="PRO_0000323777" description="Uridylate kinase">
    <location>
        <begin position="1"/>
        <end position="240"/>
    </location>
</feature>
<feature type="binding site" evidence="1">
    <location>
        <begin position="14"/>
        <end position="17"/>
    </location>
    <ligand>
        <name>ATP</name>
        <dbReference type="ChEBI" id="CHEBI:30616"/>
    </ligand>
</feature>
<feature type="binding site" evidence="1">
    <location>
        <position position="56"/>
    </location>
    <ligand>
        <name>UMP</name>
        <dbReference type="ChEBI" id="CHEBI:57865"/>
    </ligand>
</feature>
<feature type="binding site" evidence="1">
    <location>
        <position position="57"/>
    </location>
    <ligand>
        <name>ATP</name>
        <dbReference type="ChEBI" id="CHEBI:30616"/>
    </ligand>
</feature>
<feature type="binding site" evidence="1">
    <location>
        <position position="61"/>
    </location>
    <ligand>
        <name>ATP</name>
        <dbReference type="ChEBI" id="CHEBI:30616"/>
    </ligand>
</feature>
<feature type="binding site" evidence="1">
    <location>
        <position position="76"/>
    </location>
    <ligand>
        <name>UMP</name>
        <dbReference type="ChEBI" id="CHEBI:57865"/>
    </ligand>
</feature>
<feature type="binding site" evidence="1">
    <location>
        <begin position="137"/>
        <end position="144"/>
    </location>
    <ligand>
        <name>UMP</name>
        <dbReference type="ChEBI" id="CHEBI:57865"/>
    </ligand>
</feature>
<feature type="binding site" evidence="1">
    <location>
        <position position="164"/>
    </location>
    <ligand>
        <name>ATP</name>
        <dbReference type="ChEBI" id="CHEBI:30616"/>
    </ligand>
</feature>
<feature type="binding site" evidence="1">
    <location>
        <position position="170"/>
    </location>
    <ligand>
        <name>ATP</name>
        <dbReference type="ChEBI" id="CHEBI:30616"/>
    </ligand>
</feature>
<feature type="binding site" evidence="1">
    <location>
        <position position="173"/>
    </location>
    <ligand>
        <name>ATP</name>
        <dbReference type="ChEBI" id="CHEBI:30616"/>
    </ligand>
</feature>
<name>PYRH_ACISJ</name>
<comment type="function">
    <text evidence="1">Catalyzes the reversible phosphorylation of UMP to UDP.</text>
</comment>
<comment type="catalytic activity">
    <reaction evidence="1">
        <text>UMP + ATP = UDP + ADP</text>
        <dbReference type="Rhea" id="RHEA:24400"/>
        <dbReference type="ChEBI" id="CHEBI:30616"/>
        <dbReference type="ChEBI" id="CHEBI:57865"/>
        <dbReference type="ChEBI" id="CHEBI:58223"/>
        <dbReference type="ChEBI" id="CHEBI:456216"/>
        <dbReference type="EC" id="2.7.4.22"/>
    </reaction>
</comment>
<comment type="activity regulation">
    <text evidence="1">Inhibited by UTP.</text>
</comment>
<comment type="pathway">
    <text evidence="1">Pyrimidine metabolism; CTP biosynthesis via de novo pathway; UDP from UMP (UMPK route): step 1/1.</text>
</comment>
<comment type="subunit">
    <text evidence="1">Homohexamer.</text>
</comment>
<comment type="subcellular location">
    <subcellularLocation>
        <location evidence="1">Cytoplasm</location>
    </subcellularLocation>
</comment>
<comment type="similarity">
    <text evidence="1">Belongs to the UMP kinase family.</text>
</comment>
<gene>
    <name evidence="1" type="primary">pyrH</name>
    <name type="ordered locus">Ajs_2583</name>
</gene>
<dbReference type="EC" id="2.7.4.22" evidence="1"/>
<dbReference type="EMBL" id="CP000539">
    <property type="protein sequence ID" value="ABM42741.1"/>
    <property type="molecule type" value="Genomic_DNA"/>
</dbReference>
<dbReference type="SMR" id="A1W916"/>
<dbReference type="STRING" id="232721.Ajs_2583"/>
<dbReference type="KEGG" id="ajs:Ajs_2583"/>
<dbReference type="eggNOG" id="COG0528">
    <property type="taxonomic scope" value="Bacteria"/>
</dbReference>
<dbReference type="HOGENOM" id="CLU_033861_0_0_4"/>
<dbReference type="UniPathway" id="UPA00159">
    <property type="reaction ID" value="UER00275"/>
</dbReference>
<dbReference type="Proteomes" id="UP000000645">
    <property type="component" value="Chromosome"/>
</dbReference>
<dbReference type="GO" id="GO:0005829">
    <property type="term" value="C:cytosol"/>
    <property type="evidence" value="ECO:0007669"/>
    <property type="project" value="TreeGrafter"/>
</dbReference>
<dbReference type="GO" id="GO:0005524">
    <property type="term" value="F:ATP binding"/>
    <property type="evidence" value="ECO:0007669"/>
    <property type="project" value="UniProtKB-KW"/>
</dbReference>
<dbReference type="GO" id="GO:0033862">
    <property type="term" value="F:UMP kinase activity"/>
    <property type="evidence" value="ECO:0007669"/>
    <property type="project" value="UniProtKB-EC"/>
</dbReference>
<dbReference type="GO" id="GO:0044210">
    <property type="term" value="P:'de novo' CTP biosynthetic process"/>
    <property type="evidence" value="ECO:0007669"/>
    <property type="project" value="UniProtKB-UniRule"/>
</dbReference>
<dbReference type="GO" id="GO:0006225">
    <property type="term" value="P:UDP biosynthetic process"/>
    <property type="evidence" value="ECO:0007669"/>
    <property type="project" value="TreeGrafter"/>
</dbReference>
<dbReference type="CDD" id="cd04254">
    <property type="entry name" value="AAK_UMPK-PyrH-Ec"/>
    <property type="match status" value="1"/>
</dbReference>
<dbReference type="FunFam" id="3.40.1160.10:FF:000001">
    <property type="entry name" value="Uridylate kinase"/>
    <property type="match status" value="1"/>
</dbReference>
<dbReference type="Gene3D" id="3.40.1160.10">
    <property type="entry name" value="Acetylglutamate kinase-like"/>
    <property type="match status" value="1"/>
</dbReference>
<dbReference type="HAMAP" id="MF_01220_B">
    <property type="entry name" value="PyrH_B"/>
    <property type="match status" value="1"/>
</dbReference>
<dbReference type="InterPro" id="IPR036393">
    <property type="entry name" value="AceGlu_kinase-like_sf"/>
</dbReference>
<dbReference type="InterPro" id="IPR001048">
    <property type="entry name" value="Asp/Glu/Uridylate_kinase"/>
</dbReference>
<dbReference type="InterPro" id="IPR011817">
    <property type="entry name" value="Uridylate_kinase"/>
</dbReference>
<dbReference type="InterPro" id="IPR015963">
    <property type="entry name" value="Uridylate_kinase_bac"/>
</dbReference>
<dbReference type="NCBIfam" id="TIGR02075">
    <property type="entry name" value="pyrH_bact"/>
    <property type="match status" value="1"/>
</dbReference>
<dbReference type="PANTHER" id="PTHR42833">
    <property type="entry name" value="URIDYLATE KINASE"/>
    <property type="match status" value="1"/>
</dbReference>
<dbReference type="PANTHER" id="PTHR42833:SF4">
    <property type="entry name" value="URIDYLATE KINASE PUMPKIN, CHLOROPLASTIC"/>
    <property type="match status" value="1"/>
</dbReference>
<dbReference type="Pfam" id="PF00696">
    <property type="entry name" value="AA_kinase"/>
    <property type="match status" value="1"/>
</dbReference>
<dbReference type="PIRSF" id="PIRSF005650">
    <property type="entry name" value="Uridylate_kin"/>
    <property type="match status" value="1"/>
</dbReference>
<dbReference type="SUPFAM" id="SSF53633">
    <property type="entry name" value="Carbamate kinase-like"/>
    <property type="match status" value="1"/>
</dbReference>
<proteinExistence type="inferred from homology"/>
<keyword id="KW-0067">ATP-binding</keyword>
<keyword id="KW-0963">Cytoplasm</keyword>
<keyword id="KW-0418">Kinase</keyword>
<keyword id="KW-0547">Nucleotide-binding</keyword>
<keyword id="KW-0665">Pyrimidine biosynthesis</keyword>
<keyword id="KW-0808">Transferase</keyword>
<accession>A1W916</accession>
<organism>
    <name type="scientific">Acidovorax sp. (strain JS42)</name>
    <dbReference type="NCBI Taxonomy" id="232721"/>
    <lineage>
        <taxon>Bacteria</taxon>
        <taxon>Pseudomonadati</taxon>
        <taxon>Pseudomonadota</taxon>
        <taxon>Betaproteobacteria</taxon>
        <taxon>Burkholderiales</taxon>
        <taxon>Comamonadaceae</taxon>
        <taxon>Acidovorax</taxon>
    </lineage>
</organism>
<reference key="1">
    <citation type="submission" date="2006-12" db="EMBL/GenBank/DDBJ databases">
        <title>Complete sequence of chromosome 1 of Acidovorax sp. JS42.</title>
        <authorList>
            <person name="Copeland A."/>
            <person name="Lucas S."/>
            <person name="Lapidus A."/>
            <person name="Barry K."/>
            <person name="Detter J.C."/>
            <person name="Glavina del Rio T."/>
            <person name="Dalin E."/>
            <person name="Tice H."/>
            <person name="Pitluck S."/>
            <person name="Chertkov O."/>
            <person name="Brettin T."/>
            <person name="Bruce D."/>
            <person name="Han C."/>
            <person name="Tapia R."/>
            <person name="Gilna P."/>
            <person name="Schmutz J."/>
            <person name="Larimer F."/>
            <person name="Land M."/>
            <person name="Hauser L."/>
            <person name="Kyrpides N."/>
            <person name="Kim E."/>
            <person name="Stahl D."/>
            <person name="Richardson P."/>
        </authorList>
    </citation>
    <scope>NUCLEOTIDE SEQUENCE [LARGE SCALE GENOMIC DNA]</scope>
    <source>
        <strain>JS42</strain>
    </source>
</reference>
<protein>
    <recommendedName>
        <fullName evidence="1">Uridylate kinase</fullName>
        <shortName evidence="1">UK</shortName>
        <ecNumber evidence="1">2.7.4.22</ecNumber>
    </recommendedName>
    <alternativeName>
        <fullName evidence="1">Uridine monophosphate kinase</fullName>
        <shortName evidence="1">UMP kinase</shortName>
        <shortName evidence="1">UMPK</shortName>
    </alternativeName>
</protein>